<proteinExistence type="evidence at protein level"/>
<protein>
    <recommendedName>
        <fullName evidence="5">Alpha-xylosidase</fullName>
        <ecNumber evidence="3">3.2.1.177</ecNumber>
    </recommendedName>
</protein>
<name>AGDD_EMENI</name>
<sequence length="780" mass="87991">MKFTEGMWLLREGIRIDWMSNVERLNVDKDTVNLLLNKFQRHRGDTLNSSTVSARVTSPLEGIIGVKLVHWAGGLDNGPHYELNTSAGHTEITHEKGKNLKYTSGRLELDINIAPNELAFTFTTGADGQDKRKKLTGHSFRSIGYVGDSTTPKSQLSDGIFYERQGYTLAELDLSVGEKLYGLGERFGPFVKNGQSVNIWNEDGGTSSELAYKNIPFYISSNGYGVFVNHPGKVSLELQSERTTRVNVSVEGEELEYFVIEGKNPKEILKRWTDLTGKPALVPAWSYGLWLTTSFTTNYSERTVTGFLDGFKDRNLPLSVFHFDCFWMKSYQWCDFEFDADMFPDAAGYLARLKERGLKLSIWINPYVGQASPLFEIGKREGYFIKRIDGSVWQWDLWQAGMAVVDFTNPAACSWYTGHLKRLMDLGIDTFKTDFAERIPFKNITYHDGSDPARMHNYYALLYNKVVYETMTSISGKSNSLLFARSTSVGGQKYPVHWGGDCESTYEAMAESLRGGLSLGLAGYIFWASDIGGFEGTPPPALYKRWVQFGLLSSHSRLHGSSSFRVPWIYGEDCSDVLRDCVKRKISLTPYLLAEALNGHRSGTPLMRPMFMEFPEDLNTYPLDTQYMFGSNLLVAPVFSDEGIVTFYVPRTPEEEGRKQWISWFDHGKKYEGGRWYTETHGFDTLPILIRPGSVTPINYKLEKPEGNPLDGLEILVNGSIDKEVEIEIVDPETTHKVLKVMTVSERETENGVEVIARLDGVDGNENSVKVNWVGHGVTK</sequence>
<evidence type="ECO:0000250" key="1">
    <source>
        <dbReference type="UniProtKB" id="P31434"/>
    </source>
</evidence>
<evidence type="ECO:0000255" key="2">
    <source>
        <dbReference type="PROSITE-ProRule" id="PRU00498"/>
    </source>
</evidence>
<evidence type="ECO:0000269" key="3">
    <source>
    </source>
</evidence>
<evidence type="ECO:0000269" key="4">
    <source>
    </source>
</evidence>
<evidence type="ECO:0000303" key="5">
    <source>
    </source>
</evidence>
<evidence type="ECO:0000303" key="6">
    <source>
    </source>
</evidence>
<evidence type="ECO:0000305" key="7"/>
<evidence type="ECO:0000305" key="8">
    <source>
    </source>
</evidence>
<dbReference type="EC" id="3.2.1.177" evidence="3"/>
<dbReference type="EMBL" id="BN001304">
    <property type="protein sequence ID" value="CBF79518.1"/>
    <property type="molecule type" value="Genomic_DNA"/>
</dbReference>
<dbReference type="EMBL" id="AACD01000129">
    <property type="protein sequence ID" value="EAA62085.1"/>
    <property type="molecule type" value="Genomic_DNA"/>
</dbReference>
<dbReference type="RefSeq" id="XP_680774.1">
    <property type="nucleotide sequence ID" value="XM_675682.1"/>
</dbReference>
<dbReference type="SMR" id="Q5AW25"/>
<dbReference type="STRING" id="227321.Q5AW25"/>
<dbReference type="CAZy" id="GH31">
    <property type="family name" value="Glycoside Hydrolase Family 31"/>
</dbReference>
<dbReference type="GlyCosmos" id="Q5AW25">
    <property type="glycosylation" value="6 sites, No reported glycans"/>
</dbReference>
<dbReference type="EnsemblFungi" id="CBF79518">
    <property type="protein sequence ID" value="CBF79518"/>
    <property type="gene ID" value="ANIA_07505"/>
</dbReference>
<dbReference type="KEGG" id="ani:ANIA_07505"/>
<dbReference type="VEuPathDB" id="FungiDB:AN7505"/>
<dbReference type="eggNOG" id="KOG1065">
    <property type="taxonomic scope" value="Eukaryota"/>
</dbReference>
<dbReference type="HOGENOM" id="CLU_000631_10_0_1"/>
<dbReference type="InParanoid" id="Q5AW25"/>
<dbReference type="OMA" id="QGVDCFK"/>
<dbReference type="OrthoDB" id="1334205at2759"/>
<dbReference type="Proteomes" id="UP000000560">
    <property type="component" value="Chromosome IV"/>
</dbReference>
<dbReference type="GO" id="GO:0005576">
    <property type="term" value="C:extracellular region"/>
    <property type="evidence" value="ECO:0007669"/>
    <property type="project" value="UniProtKB-SubCell"/>
</dbReference>
<dbReference type="GO" id="GO:0061634">
    <property type="term" value="F:alpha-D-xyloside xylohydrolase"/>
    <property type="evidence" value="ECO:0007669"/>
    <property type="project" value="UniProtKB-EC"/>
</dbReference>
<dbReference type="GO" id="GO:0030246">
    <property type="term" value="F:carbohydrate binding"/>
    <property type="evidence" value="ECO:0007669"/>
    <property type="project" value="InterPro"/>
</dbReference>
<dbReference type="GO" id="GO:0004553">
    <property type="term" value="F:hydrolase activity, hydrolyzing O-glycosyl compounds"/>
    <property type="evidence" value="ECO:0000314"/>
    <property type="project" value="UniProtKB"/>
</dbReference>
<dbReference type="GO" id="GO:0010411">
    <property type="term" value="P:xyloglucan metabolic process"/>
    <property type="evidence" value="ECO:0000314"/>
    <property type="project" value="UniProtKB"/>
</dbReference>
<dbReference type="CDD" id="cd14752">
    <property type="entry name" value="GH31_N"/>
    <property type="match status" value="1"/>
</dbReference>
<dbReference type="CDD" id="cd06593">
    <property type="entry name" value="GH31_xylosidase_YicI"/>
    <property type="match status" value="1"/>
</dbReference>
<dbReference type="FunFam" id="3.20.20.80:FF:000053">
    <property type="entry name" value="Alpha-xylosidase YicI"/>
    <property type="match status" value="1"/>
</dbReference>
<dbReference type="FunFam" id="2.60.40.1760:FF:000009">
    <property type="entry name" value="Sugar hydrolase"/>
    <property type="match status" value="1"/>
</dbReference>
<dbReference type="FunFam" id="2.60.40.1180:FF:000057">
    <property type="entry name" value="Sugar hydrolase, putative"/>
    <property type="match status" value="1"/>
</dbReference>
<dbReference type="Gene3D" id="3.20.20.80">
    <property type="entry name" value="Glycosidases"/>
    <property type="match status" value="1"/>
</dbReference>
<dbReference type="Gene3D" id="2.60.40.1760">
    <property type="entry name" value="glycosyl hydrolase (family 31)"/>
    <property type="match status" value="1"/>
</dbReference>
<dbReference type="Gene3D" id="2.60.40.1180">
    <property type="entry name" value="Golgi alpha-mannosidase II"/>
    <property type="match status" value="1"/>
</dbReference>
<dbReference type="InterPro" id="IPR050985">
    <property type="entry name" value="Alpha-glycosidase_related"/>
</dbReference>
<dbReference type="InterPro" id="IPR011013">
    <property type="entry name" value="Gal_mutarotase_sf_dom"/>
</dbReference>
<dbReference type="InterPro" id="IPR048395">
    <property type="entry name" value="Glyco_hydro_31_C"/>
</dbReference>
<dbReference type="InterPro" id="IPR025887">
    <property type="entry name" value="Glyco_hydro_31_N_dom"/>
</dbReference>
<dbReference type="InterPro" id="IPR000322">
    <property type="entry name" value="Glyco_hydro_31_TIM"/>
</dbReference>
<dbReference type="InterPro" id="IPR013780">
    <property type="entry name" value="Glyco_hydro_b"/>
</dbReference>
<dbReference type="InterPro" id="IPR017853">
    <property type="entry name" value="Glycoside_hydrolase_SF"/>
</dbReference>
<dbReference type="NCBIfam" id="NF007940">
    <property type="entry name" value="PRK10658.1"/>
    <property type="match status" value="1"/>
</dbReference>
<dbReference type="PANTHER" id="PTHR43053">
    <property type="entry name" value="GLYCOSIDASE FAMILY 31"/>
    <property type="match status" value="1"/>
</dbReference>
<dbReference type="PANTHER" id="PTHR43053:SF4">
    <property type="entry name" value="MYOGENESIS-REGULATING GLYCOSIDASE"/>
    <property type="match status" value="1"/>
</dbReference>
<dbReference type="Pfam" id="PF13802">
    <property type="entry name" value="Gal_mutarotas_2"/>
    <property type="match status" value="1"/>
</dbReference>
<dbReference type="Pfam" id="PF01055">
    <property type="entry name" value="Glyco_hydro_31_2nd"/>
    <property type="match status" value="1"/>
</dbReference>
<dbReference type="Pfam" id="PF21365">
    <property type="entry name" value="Glyco_hydro_31_3rd"/>
    <property type="match status" value="1"/>
</dbReference>
<dbReference type="SUPFAM" id="SSF51445">
    <property type="entry name" value="(Trans)glycosidases"/>
    <property type="match status" value="1"/>
</dbReference>
<dbReference type="SUPFAM" id="SSF74650">
    <property type="entry name" value="Galactose mutarotase-like"/>
    <property type="match status" value="1"/>
</dbReference>
<dbReference type="SUPFAM" id="SSF51011">
    <property type="entry name" value="Glycosyl hydrolase domain"/>
    <property type="match status" value="1"/>
</dbReference>
<feature type="chain" id="PRO_0000432722" description="Alpha-xylosidase">
    <location>
        <begin position="1"/>
        <end position="780"/>
    </location>
</feature>
<feature type="active site" evidence="1">
    <location>
        <position position="434"/>
    </location>
</feature>
<feature type="active site" evidence="1">
    <location>
        <position position="437"/>
    </location>
</feature>
<feature type="active site" description="Proton donor" evidence="1">
    <location>
        <position position="501"/>
    </location>
</feature>
<feature type="glycosylation site" description="N-linked (GlcNAc...) asparagine" evidence="2">
    <location>
        <position position="48"/>
    </location>
</feature>
<feature type="glycosylation site" description="N-linked (GlcNAc...) asparagine" evidence="2">
    <location>
        <position position="84"/>
    </location>
</feature>
<feature type="glycosylation site" description="N-linked (GlcNAc...) asparagine" evidence="2">
    <location>
        <position position="247"/>
    </location>
</feature>
<feature type="glycosylation site" description="N-linked (GlcNAc...) asparagine" evidence="2">
    <location>
        <position position="298"/>
    </location>
</feature>
<feature type="glycosylation site" description="N-linked (GlcNAc...) asparagine" evidence="2">
    <location>
        <position position="443"/>
    </location>
</feature>
<feature type="glycosylation site" description="N-linked (GlcNAc...) asparagine" evidence="2">
    <location>
        <position position="718"/>
    </location>
</feature>
<keyword id="KW-0325">Glycoprotein</keyword>
<keyword id="KW-0326">Glycosidase</keyword>
<keyword id="KW-0378">Hydrolase</keyword>
<keyword id="KW-1185">Reference proteome</keyword>
<keyword id="KW-0964">Secreted</keyword>
<organism>
    <name type="scientific">Emericella nidulans (strain FGSC A4 / ATCC 38163 / CBS 112.46 / NRRL 194 / M139)</name>
    <name type="common">Aspergillus nidulans</name>
    <dbReference type="NCBI Taxonomy" id="227321"/>
    <lineage>
        <taxon>Eukaryota</taxon>
        <taxon>Fungi</taxon>
        <taxon>Dikarya</taxon>
        <taxon>Ascomycota</taxon>
        <taxon>Pezizomycotina</taxon>
        <taxon>Eurotiomycetes</taxon>
        <taxon>Eurotiomycetidae</taxon>
        <taxon>Eurotiales</taxon>
        <taxon>Aspergillaceae</taxon>
        <taxon>Aspergillus</taxon>
        <taxon>Aspergillus subgen. Nidulantes</taxon>
    </lineage>
</organism>
<comment type="function">
    <text evidence="3">Catalyzes the liberation of alpha-xylose from the non-reducing terminal glucose of xyloglucan oligosaccharides.</text>
</comment>
<comment type="catalytic activity">
    <reaction evidence="3">
        <text>Hydrolysis of terminal, non-reducing alpha-D-xylose residues with release of alpha-D-xylose.</text>
        <dbReference type="EC" id="3.2.1.177"/>
    </reaction>
</comment>
<comment type="subcellular location">
    <subcellularLocation>
        <location evidence="8">Secreted</location>
    </subcellularLocation>
</comment>
<comment type="induction">
    <text evidence="4">Despite the presence of an amyR-binding consensus sequence in the promoter, is not activated by isomaltose.</text>
</comment>
<comment type="similarity">
    <text evidence="7">Belongs to the glycosyl hydrolase 31 family.</text>
</comment>
<accession>Q5AW25</accession>
<accession>C8VBI7</accession>
<accession>Q1HFR5</accession>
<gene>
    <name evidence="6" type="primary">agdD</name>
    <name type="synonym">axlA</name>
    <name type="ORF">AN7505</name>
</gene>
<reference key="1">
    <citation type="journal article" date="2005" name="Nature">
        <title>Sequencing of Aspergillus nidulans and comparative analysis with A. fumigatus and A. oryzae.</title>
        <authorList>
            <person name="Galagan J.E."/>
            <person name="Calvo S.E."/>
            <person name="Cuomo C."/>
            <person name="Ma L.-J."/>
            <person name="Wortman J.R."/>
            <person name="Batzoglou S."/>
            <person name="Lee S.-I."/>
            <person name="Bastuerkmen M."/>
            <person name="Spevak C.C."/>
            <person name="Clutterbuck J."/>
            <person name="Kapitonov V."/>
            <person name="Jurka J."/>
            <person name="Scazzocchio C."/>
            <person name="Farman M.L."/>
            <person name="Butler J."/>
            <person name="Purcell S."/>
            <person name="Harris S."/>
            <person name="Braus G.H."/>
            <person name="Draht O."/>
            <person name="Busch S."/>
            <person name="D'Enfert C."/>
            <person name="Bouchier C."/>
            <person name="Goldman G.H."/>
            <person name="Bell-Pedersen D."/>
            <person name="Griffiths-Jones S."/>
            <person name="Doonan J.H."/>
            <person name="Yu J."/>
            <person name="Vienken K."/>
            <person name="Pain A."/>
            <person name="Freitag M."/>
            <person name="Selker E.U."/>
            <person name="Archer D.B."/>
            <person name="Penalva M.A."/>
            <person name="Oakley B.R."/>
            <person name="Momany M."/>
            <person name="Tanaka T."/>
            <person name="Kumagai T."/>
            <person name="Asai K."/>
            <person name="Machida M."/>
            <person name="Nierman W.C."/>
            <person name="Denning D.W."/>
            <person name="Caddick M.X."/>
            <person name="Hynes M."/>
            <person name="Paoletti M."/>
            <person name="Fischer R."/>
            <person name="Miller B.L."/>
            <person name="Dyer P.S."/>
            <person name="Sachs M.S."/>
            <person name="Osmani S.A."/>
            <person name="Birren B.W."/>
        </authorList>
    </citation>
    <scope>NUCLEOTIDE SEQUENCE [LARGE SCALE GENOMIC DNA]</scope>
    <source>
        <strain>FGSC A4 / ATCC 38163 / CBS 112.46 / NRRL 194 / M139</strain>
    </source>
</reference>
<reference key="2">
    <citation type="journal article" date="2009" name="Fungal Genet. Biol.">
        <title>The 2008 update of the Aspergillus nidulans genome annotation: a community effort.</title>
        <authorList>
            <person name="Wortman J.R."/>
            <person name="Gilsenan J.M."/>
            <person name="Joardar V."/>
            <person name="Deegan J."/>
            <person name="Clutterbuck J."/>
            <person name="Andersen M.R."/>
            <person name="Archer D."/>
            <person name="Bencina M."/>
            <person name="Braus G."/>
            <person name="Coutinho P."/>
            <person name="von Dohren H."/>
            <person name="Doonan J."/>
            <person name="Driessen A.J."/>
            <person name="Durek P."/>
            <person name="Espeso E."/>
            <person name="Fekete E."/>
            <person name="Flipphi M."/>
            <person name="Estrada C.G."/>
            <person name="Geysens S."/>
            <person name="Goldman G."/>
            <person name="de Groot P.W."/>
            <person name="Hansen K."/>
            <person name="Harris S.D."/>
            <person name="Heinekamp T."/>
            <person name="Helmstaedt K."/>
            <person name="Henrissat B."/>
            <person name="Hofmann G."/>
            <person name="Homan T."/>
            <person name="Horio T."/>
            <person name="Horiuchi H."/>
            <person name="James S."/>
            <person name="Jones M."/>
            <person name="Karaffa L."/>
            <person name="Karanyi Z."/>
            <person name="Kato M."/>
            <person name="Keller N."/>
            <person name="Kelly D.E."/>
            <person name="Kiel J.A."/>
            <person name="Kim J.M."/>
            <person name="van der Klei I.J."/>
            <person name="Klis F.M."/>
            <person name="Kovalchuk A."/>
            <person name="Krasevec N."/>
            <person name="Kubicek C.P."/>
            <person name="Liu B."/>
            <person name="Maccabe A."/>
            <person name="Meyer V."/>
            <person name="Mirabito P."/>
            <person name="Miskei M."/>
            <person name="Mos M."/>
            <person name="Mullins J."/>
            <person name="Nelson D.R."/>
            <person name="Nielsen J."/>
            <person name="Oakley B.R."/>
            <person name="Osmani S.A."/>
            <person name="Pakula T."/>
            <person name="Paszewski A."/>
            <person name="Paulsen I."/>
            <person name="Pilsyk S."/>
            <person name="Pocsi I."/>
            <person name="Punt P.J."/>
            <person name="Ram A.F."/>
            <person name="Ren Q."/>
            <person name="Robellet X."/>
            <person name="Robson G."/>
            <person name="Seiboth B."/>
            <person name="van Solingen P."/>
            <person name="Specht T."/>
            <person name="Sun J."/>
            <person name="Taheri-Talesh N."/>
            <person name="Takeshita N."/>
            <person name="Ussery D."/>
            <person name="vanKuyk P.A."/>
            <person name="Visser H."/>
            <person name="van de Vondervoort P.J."/>
            <person name="de Vries R.P."/>
            <person name="Walton J."/>
            <person name="Xiang X."/>
            <person name="Xiong Y."/>
            <person name="Zeng A.P."/>
            <person name="Brandt B.W."/>
            <person name="Cornell M.J."/>
            <person name="van den Hondel C.A."/>
            <person name="Visser J."/>
            <person name="Oliver S.G."/>
            <person name="Turner G."/>
        </authorList>
    </citation>
    <scope>GENOME REANNOTATION</scope>
    <source>
        <strain>FGSC A4 / ATCC 38163 / CBS 112.46 / NRRL 194 / M139</strain>
    </source>
</reference>
<reference key="3">
    <citation type="journal article" date="2006" name="Biosci. Biotechnol. Biochem.">
        <title>Expression profile of amylolytic genes in Aspergillus nidulans.</title>
        <authorList>
            <person name="Nakamura T."/>
            <person name="Maeda Y."/>
            <person name="Tanoue N."/>
            <person name="Makita T."/>
            <person name="Kato M."/>
            <person name="Kobayashi T."/>
        </authorList>
    </citation>
    <scope>INDUCTION</scope>
</reference>
<reference key="4">
    <citation type="journal article" date="2006" name="Proc. Natl. Acad. Sci. U.S.A.">
        <title>Development and application of a suite of polysaccharide-degrading enzymes for analyzing plant cell walls.</title>
        <authorList>
            <person name="Bauer S."/>
            <person name="Vasu P."/>
            <person name="Persson S."/>
            <person name="Mort A.J."/>
            <person name="Somerville C.R."/>
        </authorList>
    </citation>
    <scope>FUNCTION</scope>
    <scope>CATALYTIC ACTIVITY</scope>
</reference>